<feature type="chain" id="PRO_0000189088" description="1-deoxy-D-xylulose-5-phosphate synthase">
    <location>
        <begin position="1"/>
        <end position="620"/>
    </location>
</feature>
<feature type="binding site" evidence="1">
    <location>
        <position position="75"/>
    </location>
    <ligand>
        <name>thiamine diphosphate</name>
        <dbReference type="ChEBI" id="CHEBI:58937"/>
    </ligand>
</feature>
<feature type="binding site" evidence="1">
    <location>
        <begin position="116"/>
        <end position="118"/>
    </location>
    <ligand>
        <name>thiamine diphosphate</name>
        <dbReference type="ChEBI" id="CHEBI:58937"/>
    </ligand>
</feature>
<feature type="binding site" evidence="1">
    <location>
        <position position="147"/>
    </location>
    <ligand>
        <name>Mg(2+)</name>
        <dbReference type="ChEBI" id="CHEBI:18420"/>
    </ligand>
</feature>
<feature type="binding site" evidence="1">
    <location>
        <begin position="148"/>
        <end position="149"/>
    </location>
    <ligand>
        <name>thiamine diphosphate</name>
        <dbReference type="ChEBI" id="CHEBI:58937"/>
    </ligand>
</feature>
<feature type="binding site" evidence="1">
    <location>
        <position position="177"/>
    </location>
    <ligand>
        <name>Mg(2+)</name>
        <dbReference type="ChEBI" id="CHEBI:18420"/>
    </ligand>
</feature>
<feature type="binding site" evidence="1">
    <location>
        <position position="177"/>
    </location>
    <ligand>
        <name>thiamine diphosphate</name>
        <dbReference type="ChEBI" id="CHEBI:58937"/>
    </ligand>
</feature>
<feature type="binding site" evidence="1">
    <location>
        <position position="284"/>
    </location>
    <ligand>
        <name>thiamine diphosphate</name>
        <dbReference type="ChEBI" id="CHEBI:58937"/>
    </ligand>
</feature>
<feature type="binding site" evidence="1">
    <location>
        <position position="366"/>
    </location>
    <ligand>
        <name>thiamine diphosphate</name>
        <dbReference type="ChEBI" id="CHEBI:58937"/>
    </ligand>
</feature>
<reference key="1">
    <citation type="journal article" date="2003" name="Nat. Genet.">
        <title>Comparative analysis of the genome sequences of Bordetella pertussis, Bordetella parapertussis and Bordetella bronchiseptica.</title>
        <authorList>
            <person name="Parkhill J."/>
            <person name="Sebaihia M."/>
            <person name="Preston A."/>
            <person name="Murphy L.D."/>
            <person name="Thomson N.R."/>
            <person name="Harris D.E."/>
            <person name="Holden M.T.G."/>
            <person name="Churcher C.M."/>
            <person name="Bentley S.D."/>
            <person name="Mungall K.L."/>
            <person name="Cerdeno-Tarraga A.-M."/>
            <person name="Temple L."/>
            <person name="James K.D."/>
            <person name="Harris B."/>
            <person name="Quail M.A."/>
            <person name="Achtman M."/>
            <person name="Atkin R."/>
            <person name="Baker S."/>
            <person name="Basham D."/>
            <person name="Bason N."/>
            <person name="Cherevach I."/>
            <person name="Chillingworth T."/>
            <person name="Collins M."/>
            <person name="Cronin A."/>
            <person name="Davis P."/>
            <person name="Doggett J."/>
            <person name="Feltwell T."/>
            <person name="Goble A."/>
            <person name="Hamlin N."/>
            <person name="Hauser H."/>
            <person name="Holroyd S."/>
            <person name="Jagels K."/>
            <person name="Leather S."/>
            <person name="Moule S."/>
            <person name="Norberczak H."/>
            <person name="O'Neil S."/>
            <person name="Ormond D."/>
            <person name="Price C."/>
            <person name="Rabbinowitsch E."/>
            <person name="Rutter S."/>
            <person name="Sanders M."/>
            <person name="Saunders D."/>
            <person name="Seeger K."/>
            <person name="Sharp S."/>
            <person name="Simmonds M."/>
            <person name="Skelton J."/>
            <person name="Squares R."/>
            <person name="Squares S."/>
            <person name="Stevens K."/>
            <person name="Unwin L."/>
            <person name="Whitehead S."/>
            <person name="Barrell B.G."/>
            <person name="Maskell D.J."/>
        </authorList>
    </citation>
    <scope>NUCLEOTIDE SEQUENCE [LARGE SCALE GENOMIC DNA]</scope>
    <source>
        <strain>ATCC BAA-588 / NCTC 13252 / RB50</strain>
    </source>
</reference>
<gene>
    <name evidence="1" type="primary">dxs</name>
    <name type="ordered locus">BB1912</name>
</gene>
<organism>
    <name type="scientific">Bordetella bronchiseptica (strain ATCC BAA-588 / NCTC 13252 / RB50)</name>
    <name type="common">Alcaligenes bronchisepticus</name>
    <dbReference type="NCBI Taxonomy" id="257310"/>
    <lineage>
        <taxon>Bacteria</taxon>
        <taxon>Pseudomonadati</taxon>
        <taxon>Pseudomonadota</taxon>
        <taxon>Betaproteobacteria</taxon>
        <taxon>Burkholderiales</taxon>
        <taxon>Alcaligenaceae</taxon>
        <taxon>Bordetella</taxon>
    </lineage>
</organism>
<dbReference type="EC" id="2.2.1.7" evidence="1"/>
<dbReference type="EMBL" id="BX640442">
    <property type="protein sequence ID" value="CAE32409.1"/>
    <property type="molecule type" value="Genomic_DNA"/>
</dbReference>
<dbReference type="RefSeq" id="WP_003813105.1">
    <property type="nucleotide sequence ID" value="NC_002927.3"/>
</dbReference>
<dbReference type="SMR" id="Q7WL37"/>
<dbReference type="GeneID" id="93204248"/>
<dbReference type="KEGG" id="bbr:BB1912"/>
<dbReference type="eggNOG" id="COG1154">
    <property type="taxonomic scope" value="Bacteria"/>
</dbReference>
<dbReference type="HOGENOM" id="CLU_009227_1_4_4"/>
<dbReference type="UniPathway" id="UPA00064">
    <property type="reaction ID" value="UER00091"/>
</dbReference>
<dbReference type="Proteomes" id="UP000001027">
    <property type="component" value="Chromosome"/>
</dbReference>
<dbReference type="GO" id="GO:0005829">
    <property type="term" value="C:cytosol"/>
    <property type="evidence" value="ECO:0007669"/>
    <property type="project" value="TreeGrafter"/>
</dbReference>
<dbReference type="GO" id="GO:0008661">
    <property type="term" value="F:1-deoxy-D-xylulose-5-phosphate synthase activity"/>
    <property type="evidence" value="ECO:0007669"/>
    <property type="project" value="UniProtKB-UniRule"/>
</dbReference>
<dbReference type="GO" id="GO:0000287">
    <property type="term" value="F:magnesium ion binding"/>
    <property type="evidence" value="ECO:0007669"/>
    <property type="project" value="UniProtKB-UniRule"/>
</dbReference>
<dbReference type="GO" id="GO:0030976">
    <property type="term" value="F:thiamine pyrophosphate binding"/>
    <property type="evidence" value="ECO:0007669"/>
    <property type="project" value="UniProtKB-UniRule"/>
</dbReference>
<dbReference type="GO" id="GO:0052865">
    <property type="term" value="P:1-deoxy-D-xylulose 5-phosphate biosynthetic process"/>
    <property type="evidence" value="ECO:0007669"/>
    <property type="project" value="UniProtKB-UniPathway"/>
</dbReference>
<dbReference type="GO" id="GO:0019288">
    <property type="term" value="P:isopentenyl diphosphate biosynthetic process, methylerythritol 4-phosphate pathway"/>
    <property type="evidence" value="ECO:0007669"/>
    <property type="project" value="TreeGrafter"/>
</dbReference>
<dbReference type="GO" id="GO:0016114">
    <property type="term" value="P:terpenoid biosynthetic process"/>
    <property type="evidence" value="ECO:0007669"/>
    <property type="project" value="UniProtKB-UniRule"/>
</dbReference>
<dbReference type="GO" id="GO:0009228">
    <property type="term" value="P:thiamine biosynthetic process"/>
    <property type="evidence" value="ECO:0007669"/>
    <property type="project" value="UniProtKB-UniRule"/>
</dbReference>
<dbReference type="CDD" id="cd02007">
    <property type="entry name" value="TPP_DXS"/>
    <property type="match status" value="1"/>
</dbReference>
<dbReference type="CDD" id="cd07033">
    <property type="entry name" value="TPP_PYR_DXS_TK_like"/>
    <property type="match status" value="1"/>
</dbReference>
<dbReference type="FunFam" id="3.40.50.920:FF:000002">
    <property type="entry name" value="1-deoxy-D-xylulose-5-phosphate synthase"/>
    <property type="match status" value="1"/>
</dbReference>
<dbReference type="FunFam" id="3.40.50.970:FF:000005">
    <property type="entry name" value="1-deoxy-D-xylulose-5-phosphate synthase"/>
    <property type="match status" value="1"/>
</dbReference>
<dbReference type="Gene3D" id="3.40.50.920">
    <property type="match status" value="1"/>
</dbReference>
<dbReference type="Gene3D" id="3.40.50.970">
    <property type="match status" value="2"/>
</dbReference>
<dbReference type="HAMAP" id="MF_00315">
    <property type="entry name" value="DXP_synth"/>
    <property type="match status" value="1"/>
</dbReference>
<dbReference type="InterPro" id="IPR005477">
    <property type="entry name" value="Dxylulose-5-P_synthase"/>
</dbReference>
<dbReference type="InterPro" id="IPR029061">
    <property type="entry name" value="THDP-binding"/>
</dbReference>
<dbReference type="InterPro" id="IPR009014">
    <property type="entry name" value="Transketo_C/PFOR_II"/>
</dbReference>
<dbReference type="InterPro" id="IPR005475">
    <property type="entry name" value="Transketolase-like_Pyr-bd"/>
</dbReference>
<dbReference type="InterPro" id="IPR020826">
    <property type="entry name" value="Transketolase_BS"/>
</dbReference>
<dbReference type="InterPro" id="IPR033248">
    <property type="entry name" value="Transketolase_C"/>
</dbReference>
<dbReference type="InterPro" id="IPR049557">
    <property type="entry name" value="Transketolase_CS"/>
</dbReference>
<dbReference type="NCBIfam" id="TIGR00204">
    <property type="entry name" value="dxs"/>
    <property type="match status" value="1"/>
</dbReference>
<dbReference type="NCBIfam" id="NF003933">
    <property type="entry name" value="PRK05444.2-2"/>
    <property type="match status" value="1"/>
</dbReference>
<dbReference type="PANTHER" id="PTHR43322">
    <property type="entry name" value="1-D-DEOXYXYLULOSE 5-PHOSPHATE SYNTHASE-RELATED"/>
    <property type="match status" value="1"/>
</dbReference>
<dbReference type="PANTHER" id="PTHR43322:SF5">
    <property type="entry name" value="1-DEOXY-D-XYLULOSE-5-PHOSPHATE SYNTHASE, CHLOROPLASTIC"/>
    <property type="match status" value="1"/>
</dbReference>
<dbReference type="Pfam" id="PF13292">
    <property type="entry name" value="DXP_synthase_N"/>
    <property type="match status" value="1"/>
</dbReference>
<dbReference type="Pfam" id="PF02779">
    <property type="entry name" value="Transket_pyr"/>
    <property type="match status" value="1"/>
</dbReference>
<dbReference type="Pfam" id="PF02780">
    <property type="entry name" value="Transketolase_C"/>
    <property type="match status" value="1"/>
</dbReference>
<dbReference type="SMART" id="SM00861">
    <property type="entry name" value="Transket_pyr"/>
    <property type="match status" value="1"/>
</dbReference>
<dbReference type="SUPFAM" id="SSF52518">
    <property type="entry name" value="Thiamin diphosphate-binding fold (THDP-binding)"/>
    <property type="match status" value="2"/>
</dbReference>
<dbReference type="SUPFAM" id="SSF52922">
    <property type="entry name" value="TK C-terminal domain-like"/>
    <property type="match status" value="1"/>
</dbReference>
<dbReference type="PROSITE" id="PS00801">
    <property type="entry name" value="TRANSKETOLASE_1"/>
    <property type="match status" value="1"/>
</dbReference>
<dbReference type="PROSITE" id="PS00802">
    <property type="entry name" value="TRANSKETOLASE_2"/>
    <property type="match status" value="1"/>
</dbReference>
<sequence>MTTELLDRILSPADLRQLDRRELKRLADELRGFVLESVSRTGGHLSSNLGTVELSLALHYVFDTPHDRIVWDVGHQSYPHKILTGRREGMAHLRQQGGISGFPKRSESEYDAFGTAHSSTSISAALGMAVASRNAGVQRQHIAVIGDGAMSAGMAFEAMNNAGVTPNINLLVVLNDNDMSISPPVGALNRYLARLMSGQFYAAAKNVGRAVLQHVPPVLELARRLEEHAKGMVTPATLFEEFGFNYVGPIDGHDLDALVPTLQNLRALPGLQFLHVVTRKGQGYKLAEADPVLYHGPGKFDPAVGIQQAKAPARKTFTQVFGQWLCDMAERDERLVGITPAMREGSGLVEFEQRFPQRYFDVGIAEQHAVTFAAGLACEGQKPVVAIYSTFLQRGYDQLVHDVALQNLDVTFALDRAGLVGADGATHAGNYDIAFLRCVPNMVVAAPSDESEARLLLSTCYEHPGPASVRYPRGAGCGAAVGEGLATVPLGKGLVRREGRRIAILGFGTLVQAALGAAGQIDATVADMRFVKPLDRELVLELAARHDALVTVEEAAIMGGAGSAVLETLAEAGVTLPVLQLGLPDAFIDHGDQAALLAGLGLDAAGIERAIRARFGALLA</sequence>
<name>DXS_BORBR</name>
<proteinExistence type="inferred from homology"/>
<protein>
    <recommendedName>
        <fullName evidence="1">1-deoxy-D-xylulose-5-phosphate synthase</fullName>
        <ecNumber evidence="1">2.2.1.7</ecNumber>
    </recommendedName>
    <alternativeName>
        <fullName evidence="1">1-deoxyxylulose-5-phosphate synthase</fullName>
        <shortName evidence="1">DXP synthase</shortName>
        <shortName evidence="1">DXPS</shortName>
    </alternativeName>
</protein>
<accession>Q7WL37</accession>
<keyword id="KW-0414">Isoprene biosynthesis</keyword>
<keyword id="KW-0460">Magnesium</keyword>
<keyword id="KW-0479">Metal-binding</keyword>
<keyword id="KW-0784">Thiamine biosynthesis</keyword>
<keyword id="KW-0786">Thiamine pyrophosphate</keyword>
<keyword id="KW-0808">Transferase</keyword>
<comment type="function">
    <text evidence="1">Catalyzes the acyloin condensation reaction between C atoms 2 and 3 of pyruvate and glyceraldehyde 3-phosphate to yield 1-deoxy-D-xylulose-5-phosphate (DXP).</text>
</comment>
<comment type="catalytic activity">
    <reaction evidence="1">
        <text>D-glyceraldehyde 3-phosphate + pyruvate + H(+) = 1-deoxy-D-xylulose 5-phosphate + CO2</text>
        <dbReference type="Rhea" id="RHEA:12605"/>
        <dbReference type="ChEBI" id="CHEBI:15361"/>
        <dbReference type="ChEBI" id="CHEBI:15378"/>
        <dbReference type="ChEBI" id="CHEBI:16526"/>
        <dbReference type="ChEBI" id="CHEBI:57792"/>
        <dbReference type="ChEBI" id="CHEBI:59776"/>
        <dbReference type="EC" id="2.2.1.7"/>
    </reaction>
</comment>
<comment type="cofactor">
    <cofactor evidence="1">
        <name>Mg(2+)</name>
        <dbReference type="ChEBI" id="CHEBI:18420"/>
    </cofactor>
    <text evidence="1">Binds 1 Mg(2+) ion per subunit.</text>
</comment>
<comment type="cofactor">
    <cofactor evidence="1">
        <name>thiamine diphosphate</name>
        <dbReference type="ChEBI" id="CHEBI:58937"/>
    </cofactor>
    <text evidence="1">Binds 1 thiamine pyrophosphate per subunit.</text>
</comment>
<comment type="pathway">
    <text evidence="1">Metabolic intermediate biosynthesis; 1-deoxy-D-xylulose 5-phosphate biosynthesis; 1-deoxy-D-xylulose 5-phosphate from D-glyceraldehyde 3-phosphate and pyruvate: step 1/1.</text>
</comment>
<comment type="subunit">
    <text evidence="1">Homodimer.</text>
</comment>
<comment type="similarity">
    <text evidence="1">Belongs to the transketolase family. DXPS subfamily.</text>
</comment>
<evidence type="ECO:0000255" key="1">
    <source>
        <dbReference type="HAMAP-Rule" id="MF_00315"/>
    </source>
</evidence>